<comment type="subcellular location">
    <subcellularLocation>
        <location evidence="3">Cytoplasm</location>
    </subcellularLocation>
</comment>
<comment type="miscellaneous">
    <text evidence="4">Present with 358 molecules/cell in log phase SD medium.</text>
</comment>
<accession>Q3E7A7</accession>
<accession>D6VXR7</accession>
<protein>
    <recommendedName>
        <fullName>Uncharacterized protein YKL018C-A</fullName>
    </recommendedName>
</protein>
<reference key="1">
    <citation type="journal article" date="1994" name="Nature">
        <title>Complete DNA sequence of yeast chromosome XI.</title>
        <authorList>
            <person name="Dujon B."/>
            <person name="Alexandraki D."/>
            <person name="Andre B."/>
            <person name="Ansorge W."/>
            <person name="Baladron V."/>
            <person name="Ballesta J.P.G."/>
            <person name="Banrevi A."/>
            <person name="Bolle P.-A."/>
            <person name="Bolotin-Fukuhara M."/>
            <person name="Bossier P."/>
            <person name="Bou G."/>
            <person name="Boyer J."/>
            <person name="Buitrago M.J."/>
            <person name="Cheret G."/>
            <person name="Colleaux L."/>
            <person name="Daignan-Fornier B."/>
            <person name="del Rey F."/>
            <person name="Dion C."/>
            <person name="Domdey H."/>
            <person name="Duesterhoeft A."/>
            <person name="Duesterhus S."/>
            <person name="Entian K.-D."/>
            <person name="Erfle H."/>
            <person name="Esteban P.F."/>
            <person name="Feldmann H."/>
            <person name="Fernandes L."/>
            <person name="Fobo G.M."/>
            <person name="Fritz C."/>
            <person name="Fukuhara H."/>
            <person name="Gabel C."/>
            <person name="Gaillon L."/>
            <person name="Garcia-Cantalejo J.M."/>
            <person name="Garcia-Ramirez J.J."/>
            <person name="Gent M.E."/>
            <person name="Ghazvini M."/>
            <person name="Goffeau A."/>
            <person name="Gonzalez A."/>
            <person name="Grothues D."/>
            <person name="Guerreiro P."/>
            <person name="Hegemann J.H."/>
            <person name="Hewitt N."/>
            <person name="Hilger F."/>
            <person name="Hollenberg C.P."/>
            <person name="Horaitis O."/>
            <person name="Indge K.J."/>
            <person name="Jacquier A."/>
            <person name="James C.M."/>
            <person name="Jauniaux J.-C."/>
            <person name="Jimenez A."/>
            <person name="Keuchel H."/>
            <person name="Kirchrath L."/>
            <person name="Kleine K."/>
            <person name="Koetter P."/>
            <person name="Legrain P."/>
            <person name="Liebl S."/>
            <person name="Louis E.J."/>
            <person name="Maia e Silva A."/>
            <person name="Marck C."/>
            <person name="Monnier A.-L."/>
            <person name="Moestl D."/>
            <person name="Mueller S."/>
            <person name="Obermaier B."/>
            <person name="Oliver S.G."/>
            <person name="Pallier C."/>
            <person name="Pascolo S."/>
            <person name="Pfeiffer F."/>
            <person name="Philippsen P."/>
            <person name="Planta R.J."/>
            <person name="Pohl F.M."/>
            <person name="Pohl T.M."/>
            <person name="Poehlmann R."/>
            <person name="Portetelle D."/>
            <person name="Purnelle B."/>
            <person name="Puzos V."/>
            <person name="Ramezani Rad M."/>
            <person name="Rasmussen S.W."/>
            <person name="Remacha M.A."/>
            <person name="Revuelta J.L."/>
            <person name="Richard G.-F."/>
            <person name="Rieger M."/>
            <person name="Rodrigues-Pousada C."/>
            <person name="Rose M."/>
            <person name="Rupp T."/>
            <person name="Santos M.A."/>
            <person name="Schwager C."/>
            <person name="Sensen C."/>
            <person name="Skala J."/>
            <person name="Soares H."/>
            <person name="Sor F."/>
            <person name="Stegemann J."/>
            <person name="Tettelin H."/>
            <person name="Thierry A."/>
            <person name="Tzermia M."/>
            <person name="Urrestarazu L.A."/>
            <person name="van Dyck L."/>
            <person name="van Vliet-Reedijk J.C."/>
            <person name="Valens M."/>
            <person name="Vandenbol M."/>
            <person name="Vilela C."/>
            <person name="Vissers S."/>
            <person name="von Wettstein D."/>
            <person name="Voss H."/>
            <person name="Wiemann S."/>
            <person name="Xu G."/>
            <person name="Zimmermann J."/>
            <person name="Haasemann M."/>
            <person name="Becker I."/>
            <person name="Mewes H.-W."/>
        </authorList>
    </citation>
    <scope>NUCLEOTIDE SEQUENCE [LARGE SCALE GENOMIC DNA]</scope>
    <source>
        <strain>ATCC 204508 / S288c</strain>
    </source>
</reference>
<reference key="2">
    <citation type="journal article" date="2014" name="G3 (Bethesda)">
        <title>The reference genome sequence of Saccharomyces cerevisiae: Then and now.</title>
        <authorList>
            <person name="Engel S.R."/>
            <person name="Dietrich F.S."/>
            <person name="Fisk D.G."/>
            <person name="Binkley G."/>
            <person name="Balakrishnan R."/>
            <person name="Costanzo M.C."/>
            <person name="Dwight S.S."/>
            <person name="Hitz B.C."/>
            <person name="Karra K."/>
            <person name="Nash R.S."/>
            <person name="Weng S."/>
            <person name="Wong E.D."/>
            <person name="Lloyd P."/>
            <person name="Skrzypek M.S."/>
            <person name="Miyasato S.R."/>
            <person name="Simison M."/>
            <person name="Cherry J.M."/>
        </authorList>
    </citation>
    <scope>GENOME REANNOTATION</scope>
    <source>
        <strain>ATCC 204508 / S288c</strain>
    </source>
</reference>
<reference key="3">
    <citation type="journal article" date="2000" name="FEBS Lett.">
        <title>Genomic exploration of the hemiascomycetous yeasts: 4. The genome of Saccharomyces cerevisiae revisited.</title>
        <authorList>
            <person name="Blandin G."/>
            <person name="Durrens P."/>
            <person name="Tekaia F."/>
            <person name="Aigle M."/>
            <person name="Bolotin-Fukuhara M."/>
            <person name="Bon E."/>
            <person name="Casaregola S."/>
            <person name="de Montigny J."/>
            <person name="Gaillardin C."/>
            <person name="Lepingle A."/>
            <person name="Llorente B."/>
            <person name="Malpertuy A."/>
            <person name="Neuveglise C."/>
            <person name="Ozier-Kalogeropoulos O."/>
            <person name="Perrin A."/>
            <person name="Potier S."/>
            <person name="Souciet J.-L."/>
            <person name="Talla E."/>
            <person name="Toffano-Nioche C."/>
            <person name="Wesolowski-Louvel M."/>
            <person name="Marck C."/>
            <person name="Dujon B."/>
        </authorList>
    </citation>
    <scope>GENOME REANNOTATION</scope>
</reference>
<reference key="4">
    <citation type="journal article" date="2003" name="Nature">
        <title>Global analysis of protein localization in budding yeast.</title>
        <authorList>
            <person name="Huh W.-K."/>
            <person name="Falvo J.V."/>
            <person name="Gerke L.C."/>
            <person name="Carroll A.S."/>
            <person name="Howson R.W."/>
            <person name="Weissman J.S."/>
            <person name="O'Shea E.K."/>
        </authorList>
    </citation>
    <scope>SUBCELLULAR LOCATION [LARGE SCALE ANALYSIS]</scope>
</reference>
<reference key="5">
    <citation type="journal article" date="2003" name="Nature">
        <title>Global analysis of protein expression in yeast.</title>
        <authorList>
            <person name="Ghaemmaghami S."/>
            <person name="Huh W.-K."/>
            <person name="Bower K."/>
            <person name="Howson R.W."/>
            <person name="Belle A."/>
            <person name="Dephoure N."/>
            <person name="O'Shea E.K."/>
            <person name="Weissman J.S."/>
        </authorList>
    </citation>
    <scope>LEVEL OF PROTEIN EXPRESSION [LARGE SCALE ANALYSIS]</scope>
</reference>
<sequence length="99" mass="11811">MLGMIRWVVEGTLVAMLLSAIRRETGMIFFYNQYQLGGWIHRYLSWGEMCYTRTLKMVKRSKFFRKQLNEDGFGRINDSGPKRRGRDQSQYSSRFVELD</sequence>
<dbReference type="EMBL" id="Z28018">
    <property type="status" value="NOT_ANNOTATED_CDS"/>
    <property type="molecule type" value="Genomic_DNA"/>
</dbReference>
<dbReference type="EMBL" id="BK006944">
    <property type="protein sequence ID" value="DAA09137.1"/>
    <property type="molecule type" value="Genomic_DNA"/>
</dbReference>
<dbReference type="SMR" id="Q3E7A7"/>
<dbReference type="BioGRID" id="34113">
    <property type="interactions" value="20"/>
</dbReference>
<dbReference type="FunCoup" id="Q3E7A7">
    <property type="interactions" value="2"/>
</dbReference>
<dbReference type="IntAct" id="Q3E7A7">
    <property type="interactions" value="1"/>
</dbReference>
<dbReference type="iPTMnet" id="Q3E7A7"/>
<dbReference type="PaxDb" id="4932-YKL018C-A"/>
<dbReference type="PeptideAtlas" id="Q3E7A7"/>
<dbReference type="EnsemblFungi" id="YKL018C-A_mRNA">
    <property type="protein sequence ID" value="YKL018C-A"/>
    <property type="gene ID" value="YKL018C-A"/>
</dbReference>
<dbReference type="KEGG" id="sce:YKL018C-A"/>
<dbReference type="AGR" id="SGD:S000007615"/>
<dbReference type="SGD" id="S000007615">
    <property type="gene designation" value="YKL018C-A"/>
</dbReference>
<dbReference type="VEuPathDB" id="FungiDB:YKL018C-A"/>
<dbReference type="eggNOG" id="ENOG502SA6M">
    <property type="taxonomic scope" value="Eukaryota"/>
</dbReference>
<dbReference type="HOGENOM" id="CLU_151392_0_1_1"/>
<dbReference type="InParanoid" id="Q3E7A7"/>
<dbReference type="OMA" id="WGEYLFD"/>
<dbReference type="OrthoDB" id="16824at2759"/>
<dbReference type="BioCyc" id="YEAST:G3O-32094-MONOMER"/>
<dbReference type="BioGRID-ORCS" id="853850">
    <property type="hits" value="0 hits in 10 CRISPR screens"/>
</dbReference>
<dbReference type="PRO" id="PR:Q3E7A7"/>
<dbReference type="Proteomes" id="UP000002311">
    <property type="component" value="Chromosome XI"/>
</dbReference>
<dbReference type="RNAct" id="Q3E7A7">
    <property type="molecule type" value="protein"/>
</dbReference>
<dbReference type="GO" id="GO:0005737">
    <property type="term" value="C:cytoplasm"/>
    <property type="evidence" value="ECO:0007005"/>
    <property type="project" value="SGD"/>
</dbReference>
<dbReference type="InterPro" id="IPR013726">
    <property type="entry name" value="Mitofissin"/>
</dbReference>
<dbReference type="PANTHER" id="PTHR28075">
    <property type="entry name" value="CHROMOSOME 16, WHOLE GENOME SHOTGUN SEQUENCE"/>
    <property type="match status" value="1"/>
</dbReference>
<dbReference type="PANTHER" id="PTHR28075:SF1">
    <property type="entry name" value="DUF1748-DOMAIN-CONTAINING PROTEIN"/>
    <property type="match status" value="1"/>
</dbReference>
<dbReference type="Pfam" id="PF08520">
    <property type="entry name" value="Mitofissin"/>
    <property type="match status" value="1"/>
</dbReference>
<evidence type="ECO:0000255" key="1"/>
<evidence type="ECO:0000256" key="2">
    <source>
        <dbReference type="SAM" id="MobiDB-lite"/>
    </source>
</evidence>
<evidence type="ECO:0000269" key="3">
    <source>
    </source>
</evidence>
<evidence type="ECO:0000269" key="4">
    <source>
    </source>
</evidence>
<feature type="signal peptide" evidence="1">
    <location>
        <begin position="1"/>
        <end position="19"/>
    </location>
</feature>
<feature type="chain" id="PRO_0000245424" description="Uncharacterized protein YKL018C-A">
    <location>
        <begin position="20"/>
        <end position="99"/>
    </location>
</feature>
<feature type="region of interest" description="Disordered" evidence="2">
    <location>
        <begin position="71"/>
        <end position="99"/>
    </location>
</feature>
<name>YK018_YEAST</name>
<organism>
    <name type="scientific">Saccharomyces cerevisiae (strain ATCC 204508 / S288c)</name>
    <name type="common">Baker's yeast</name>
    <dbReference type="NCBI Taxonomy" id="559292"/>
    <lineage>
        <taxon>Eukaryota</taxon>
        <taxon>Fungi</taxon>
        <taxon>Dikarya</taxon>
        <taxon>Ascomycota</taxon>
        <taxon>Saccharomycotina</taxon>
        <taxon>Saccharomycetes</taxon>
        <taxon>Saccharomycetales</taxon>
        <taxon>Saccharomycetaceae</taxon>
        <taxon>Saccharomyces</taxon>
    </lineage>
</organism>
<proteinExistence type="evidence at protein level"/>
<keyword id="KW-0963">Cytoplasm</keyword>
<keyword id="KW-1185">Reference proteome</keyword>
<keyword id="KW-0732">Signal</keyword>
<gene>
    <name type="ordered locus">YKL018C-A</name>
</gene>